<accession>Q8A014</accession>
<keyword id="KW-0012">Acyltransferase</keyword>
<keyword id="KW-0441">Lipid A biosynthesis</keyword>
<keyword id="KW-0444">Lipid biosynthesis</keyword>
<keyword id="KW-0443">Lipid metabolism</keyword>
<keyword id="KW-1185">Reference proteome</keyword>
<keyword id="KW-0677">Repeat</keyword>
<keyword id="KW-0808">Transferase</keyword>
<comment type="function">
    <text evidence="1">Catalyzes the N-acylation of UDP-3-O-acylglucosamine using 3-hydroxyacyl-ACP as the acyl donor. Is involved in the biosynthesis of lipid A, a phosphorylated glycolipid that anchors the lipopolysaccharide to the outer membrane of the cell.</text>
</comment>
<comment type="catalytic activity">
    <reaction evidence="1">
        <text>a UDP-3-O-[(3R)-3-hydroxyacyl]-alpha-D-glucosamine + a (3R)-hydroxyacyl-[ACP] = a UDP-2-N,3-O-bis[(3R)-3-hydroxyacyl]-alpha-D-glucosamine + holo-[ACP] + H(+)</text>
        <dbReference type="Rhea" id="RHEA:53836"/>
        <dbReference type="Rhea" id="RHEA-COMP:9685"/>
        <dbReference type="Rhea" id="RHEA-COMP:9945"/>
        <dbReference type="ChEBI" id="CHEBI:15378"/>
        <dbReference type="ChEBI" id="CHEBI:64479"/>
        <dbReference type="ChEBI" id="CHEBI:78827"/>
        <dbReference type="ChEBI" id="CHEBI:137740"/>
        <dbReference type="ChEBI" id="CHEBI:137748"/>
        <dbReference type="EC" id="2.3.1.191"/>
    </reaction>
</comment>
<comment type="pathway">
    <text evidence="1">Bacterial outer membrane biogenesis; LPS lipid A biosynthesis.</text>
</comment>
<comment type="subunit">
    <text evidence="1">Homotrimer.</text>
</comment>
<comment type="similarity">
    <text evidence="1">Belongs to the transferase hexapeptide repeat family. LpxD subfamily.</text>
</comment>
<proteinExistence type="inferred from homology"/>
<protein>
    <recommendedName>
        <fullName evidence="1">UDP-3-O-acylglucosamine N-acyltransferase</fullName>
        <ecNumber evidence="1">2.3.1.191</ecNumber>
    </recommendedName>
</protein>
<gene>
    <name evidence="1" type="primary">lpxD</name>
    <name type="ordered locus">BT_4207</name>
</gene>
<evidence type="ECO:0000255" key="1">
    <source>
        <dbReference type="HAMAP-Rule" id="MF_00523"/>
    </source>
</evidence>
<name>LPXD_BACTN</name>
<sequence>MEFSAKQIAAFIQGEIIGDENATVHTFAKIEEGMPGAISFLSNPKYTPYIYETQSSIVLVNKDFVPEHEIRATLIKVDNAYESLAKLLNLYEMSKPKKQGIDSLAYIAPSAKIGENVYIGAFAYIGENAVIGDNTQIYPHTFVGDGVKIGNGCLLYSNVNVYHDCRIGNECILHSGAVIGADGFGFAPTPNGYDKIPQIGIVILEDKVDIGANTCVDRATMGATIIHSGAKIDNLVQIAHNDEIGSHTVMAAQVGIAGSAKIGEWCMFGGQVGIAGHITIGDRVNLGAQSGIPSSIKADSVLIGTPPMEPKAYFKAAVVTKNLPDMQKEIRNLRKEVEELKQLLNK</sequence>
<reference key="1">
    <citation type="journal article" date="2003" name="Science">
        <title>A genomic view of the human-Bacteroides thetaiotaomicron symbiosis.</title>
        <authorList>
            <person name="Xu J."/>
            <person name="Bjursell M.K."/>
            <person name="Himrod J."/>
            <person name="Deng S."/>
            <person name="Carmichael L.K."/>
            <person name="Chiang H.C."/>
            <person name="Hooper L.V."/>
            <person name="Gordon J.I."/>
        </authorList>
    </citation>
    <scope>NUCLEOTIDE SEQUENCE [LARGE SCALE GENOMIC DNA]</scope>
    <source>
        <strain>ATCC 29148 / DSM 2079 / JCM 5827 / CCUG 10774 / NCTC 10582 / VPI-5482 / E50</strain>
    </source>
</reference>
<dbReference type="EC" id="2.3.1.191" evidence="1"/>
<dbReference type="EMBL" id="AE015928">
    <property type="protein sequence ID" value="AAO79312.1"/>
    <property type="molecule type" value="Genomic_DNA"/>
</dbReference>
<dbReference type="RefSeq" id="NP_813118.1">
    <property type="nucleotide sequence ID" value="NC_004663.1"/>
</dbReference>
<dbReference type="RefSeq" id="WP_008764416.1">
    <property type="nucleotide sequence ID" value="NC_004663.1"/>
</dbReference>
<dbReference type="SMR" id="Q8A014"/>
<dbReference type="FunCoup" id="Q8A014">
    <property type="interactions" value="367"/>
</dbReference>
<dbReference type="STRING" id="226186.BT_4207"/>
<dbReference type="PaxDb" id="226186-BT_4207"/>
<dbReference type="DNASU" id="1074215"/>
<dbReference type="EnsemblBacteria" id="AAO79312">
    <property type="protein sequence ID" value="AAO79312"/>
    <property type="gene ID" value="BT_4207"/>
</dbReference>
<dbReference type="GeneID" id="60925380"/>
<dbReference type="KEGG" id="bth:BT_4207"/>
<dbReference type="PATRIC" id="fig|226186.12.peg.4274"/>
<dbReference type="eggNOG" id="COG1044">
    <property type="taxonomic scope" value="Bacteria"/>
</dbReference>
<dbReference type="HOGENOM" id="CLU_049865_0_0_10"/>
<dbReference type="InParanoid" id="Q8A014"/>
<dbReference type="OrthoDB" id="9784739at2"/>
<dbReference type="UniPathway" id="UPA00973"/>
<dbReference type="Proteomes" id="UP000001414">
    <property type="component" value="Chromosome"/>
</dbReference>
<dbReference type="GO" id="GO:0016020">
    <property type="term" value="C:membrane"/>
    <property type="evidence" value="ECO:0007669"/>
    <property type="project" value="GOC"/>
</dbReference>
<dbReference type="GO" id="GO:0016410">
    <property type="term" value="F:N-acyltransferase activity"/>
    <property type="evidence" value="ECO:0007669"/>
    <property type="project" value="InterPro"/>
</dbReference>
<dbReference type="GO" id="GO:0009245">
    <property type="term" value="P:lipid A biosynthetic process"/>
    <property type="evidence" value="ECO:0007669"/>
    <property type="project" value="UniProtKB-UniRule"/>
</dbReference>
<dbReference type="CDD" id="cd03352">
    <property type="entry name" value="LbH_LpxD"/>
    <property type="match status" value="1"/>
</dbReference>
<dbReference type="Gene3D" id="2.160.10.10">
    <property type="entry name" value="Hexapeptide repeat proteins"/>
    <property type="match status" value="1"/>
</dbReference>
<dbReference type="Gene3D" id="3.40.1390.10">
    <property type="entry name" value="MurE/MurF, N-terminal domain"/>
    <property type="match status" value="1"/>
</dbReference>
<dbReference type="HAMAP" id="MF_00523">
    <property type="entry name" value="LpxD"/>
    <property type="match status" value="1"/>
</dbReference>
<dbReference type="InterPro" id="IPR001451">
    <property type="entry name" value="Hexapep"/>
</dbReference>
<dbReference type="InterPro" id="IPR007691">
    <property type="entry name" value="LpxD"/>
</dbReference>
<dbReference type="InterPro" id="IPR011004">
    <property type="entry name" value="Trimer_LpxA-like_sf"/>
</dbReference>
<dbReference type="InterPro" id="IPR020573">
    <property type="entry name" value="UDP_GlcNAc_AcTrfase_non-rep"/>
</dbReference>
<dbReference type="NCBIfam" id="TIGR01853">
    <property type="entry name" value="lipid_A_lpxD"/>
    <property type="match status" value="1"/>
</dbReference>
<dbReference type="NCBIfam" id="NF002060">
    <property type="entry name" value="PRK00892.1"/>
    <property type="match status" value="1"/>
</dbReference>
<dbReference type="PANTHER" id="PTHR43378">
    <property type="entry name" value="UDP-3-O-ACYLGLUCOSAMINE N-ACYLTRANSFERASE"/>
    <property type="match status" value="1"/>
</dbReference>
<dbReference type="PANTHER" id="PTHR43378:SF2">
    <property type="entry name" value="UDP-3-O-ACYLGLUCOSAMINE N-ACYLTRANSFERASE 1, MITOCHONDRIAL-RELATED"/>
    <property type="match status" value="1"/>
</dbReference>
<dbReference type="Pfam" id="PF00132">
    <property type="entry name" value="Hexapep"/>
    <property type="match status" value="2"/>
</dbReference>
<dbReference type="Pfam" id="PF14602">
    <property type="entry name" value="Hexapep_2"/>
    <property type="match status" value="1"/>
</dbReference>
<dbReference type="Pfam" id="PF04613">
    <property type="entry name" value="LpxD"/>
    <property type="match status" value="1"/>
</dbReference>
<dbReference type="SUPFAM" id="SSF51161">
    <property type="entry name" value="Trimeric LpxA-like enzymes"/>
    <property type="match status" value="1"/>
</dbReference>
<feature type="chain" id="PRO_0000059645" description="UDP-3-O-acylglucosamine N-acyltransferase">
    <location>
        <begin position="1"/>
        <end position="346"/>
    </location>
</feature>
<feature type="active site" description="Proton acceptor" evidence="1">
    <location>
        <position position="240"/>
    </location>
</feature>
<organism>
    <name type="scientific">Bacteroides thetaiotaomicron (strain ATCC 29148 / DSM 2079 / JCM 5827 / CCUG 10774 / NCTC 10582 / VPI-5482 / E50)</name>
    <dbReference type="NCBI Taxonomy" id="226186"/>
    <lineage>
        <taxon>Bacteria</taxon>
        <taxon>Pseudomonadati</taxon>
        <taxon>Bacteroidota</taxon>
        <taxon>Bacteroidia</taxon>
        <taxon>Bacteroidales</taxon>
        <taxon>Bacteroidaceae</taxon>
        <taxon>Bacteroides</taxon>
    </lineage>
</organism>